<protein>
    <recommendedName>
        <fullName evidence="1">Chorismate synthase</fullName>
        <shortName evidence="1">CS</shortName>
        <ecNumber evidence="1">4.2.3.5</ecNumber>
    </recommendedName>
    <alternativeName>
        <fullName evidence="1">5-enolpyruvylshikimate-3-phosphate phospholyase</fullName>
    </alternativeName>
</protein>
<accession>Q741J9</accession>
<reference key="1">
    <citation type="journal article" date="2005" name="Proc. Natl. Acad. Sci. U.S.A.">
        <title>The complete genome sequence of Mycobacterium avium subspecies paratuberculosis.</title>
        <authorList>
            <person name="Li L."/>
            <person name="Bannantine J.P."/>
            <person name="Zhang Q."/>
            <person name="Amonsin A."/>
            <person name="May B.J."/>
            <person name="Alt D."/>
            <person name="Banerji N."/>
            <person name="Kanjilal S."/>
            <person name="Kapur V."/>
        </authorList>
    </citation>
    <scope>NUCLEOTIDE SEQUENCE [LARGE SCALE GENOMIC DNA]</scope>
    <source>
        <strain>ATCC BAA-968 / K-10</strain>
    </source>
</reference>
<gene>
    <name evidence="1" type="primary">aroC</name>
    <name type="ordered locus">MAP_1091</name>
</gene>
<organism>
    <name type="scientific">Mycolicibacterium paratuberculosis (strain ATCC BAA-968 / K-10)</name>
    <name type="common">Mycobacterium paratuberculosis</name>
    <dbReference type="NCBI Taxonomy" id="262316"/>
    <lineage>
        <taxon>Bacteria</taxon>
        <taxon>Bacillati</taxon>
        <taxon>Actinomycetota</taxon>
        <taxon>Actinomycetes</taxon>
        <taxon>Mycobacteriales</taxon>
        <taxon>Mycobacteriaceae</taxon>
        <taxon>Mycobacterium</taxon>
        <taxon>Mycobacterium avium complex (MAC)</taxon>
    </lineage>
</organism>
<dbReference type="EC" id="4.2.3.5" evidence="1"/>
<dbReference type="EMBL" id="AE016958">
    <property type="protein sequence ID" value="AAS03408.1"/>
    <property type="molecule type" value="Genomic_DNA"/>
</dbReference>
<dbReference type="SMR" id="Q741J9"/>
<dbReference type="STRING" id="262316.MAP_1091"/>
<dbReference type="KEGG" id="mpa:MAP_1091"/>
<dbReference type="eggNOG" id="COG0082">
    <property type="taxonomic scope" value="Bacteria"/>
</dbReference>
<dbReference type="HOGENOM" id="CLU_034547_2_0_11"/>
<dbReference type="UniPathway" id="UPA00053">
    <property type="reaction ID" value="UER00090"/>
</dbReference>
<dbReference type="Proteomes" id="UP000000580">
    <property type="component" value="Chromosome"/>
</dbReference>
<dbReference type="GO" id="GO:0005829">
    <property type="term" value="C:cytosol"/>
    <property type="evidence" value="ECO:0007669"/>
    <property type="project" value="TreeGrafter"/>
</dbReference>
<dbReference type="GO" id="GO:0004107">
    <property type="term" value="F:chorismate synthase activity"/>
    <property type="evidence" value="ECO:0007669"/>
    <property type="project" value="UniProtKB-UniRule"/>
</dbReference>
<dbReference type="GO" id="GO:0010181">
    <property type="term" value="F:FMN binding"/>
    <property type="evidence" value="ECO:0007669"/>
    <property type="project" value="TreeGrafter"/>
</dbReference>
<dbReference type="GO" id="GO:0008652">
    <property type="term" value="P:amino acid biosynthetic process"/>
    <property type="evidence" value="ECO:0007669"/>
    <property type="project" value="UniProtKB-KW"/>
</dbReference>
<dbReference type="GO" id="GO:0009073">
    <property type="term" value="P:aromatic amino acid family biosynthetic process"/>
    <property type="evidence" value="ECO:0007669"/>
    <property type="project" value="UniProtKB-KW"/>
</dbReference>
<dbReference type="GO" id="GO:0009423">
    <property type="term" value="P:chorismate biosynthetic process"/>
    <property type="evidence" value="ECO:0007669"/>
    <property type="project" value="UniProtKB-UniRule"/>
</dbReference>
<dbReference type="CDD" id="cd07304">
    <property type="entry name" value="Chorismate_synthase"/>
    <property type="match status" value="1"/>
</dbReference>
<dbReference type="FunFam" id="3.60.150.10:FF:000002">
    <property type="entry name" value="Chorismate synthase"/>
    <property type="match status" value="1"/>
</dbReference>
<dbReference type="Gene3D" id="3.60.150.10">
    <property type="entry name" value="Chorismate synthase AroC"/>
    <property type="match status" value="1"/>
</dbReference>
<dbReference type="HAMAP" id="MF_00300">
    <property type="entry name" value="Chorismate_synth"/>
    <property type="match status" value="1"/>
</dbReference>
<dbReference type="InterPro" id="IPR000453">
    <property type="entry name" value="Chorismate_synth"/>
</dbReference>
<dbReference type="InterPro" id="IPR035904">
    <property type="entry name" value="Chorismate_synth_AroC_sf"/>
</dbReference>
<dbReference type="InterPro" id="IPR020541">
    <property type="entry name" value="Chorismate_synthase_CS"/>
</dbReference>
<dbReference type="NCBIfam" id="TIGR00033">
    <property type="entry name" value="aroC"/>
    <property type="match status" value="1"/>
</dbReference>
<dbReference type="NCBIfam" id="NF003793">
    <property type="entry name" value="PRK05382.1"/>
    <property type="match status" value="1"/>
</dbReference>
<dbReference type="PANTHER" id="PTHR21085">
    <property type="entry name" value="CHORISMATE SYNTHASE"/>
    <property type="match status" value="1"/>
</dbReference>
<dbReference type="PANTHER" id="PTHR21085:SF0">
    <property type="entry name" value="CHORISMATE SYNTHASE"/>
    <property type="match status" value="1"/>
</dbReference>
<dbReference type="Pfam" id="PF01264">
    <property type="entry name" value="Chorismate_synt"/>
    <property type="match status" value="1"/>
</dbReference>
<dbReference type="PIRSF" id="PIRSF001456">
    <property type="entry name" value="Chorismate_synth"/>
    <property type="match status" value="1"/>
</dbReference>
<dbReference type="SUPFAM" id="SSF103263">
    <property type="entry name" value="Chorismate synthase, AroC"/>
    <property type="match status" value="1"/>
</dbReference>
<dbReference type="PROSITE" id="PS00787">
    <property type="entry name" value="CHORISMATE_SYNTHASE_1"/>
    <property type="match status" value="1"/>
</dbReference>
<dbReference type="PROSITE" id="PS00788">
    <property type="entry name" value="CHORISMATE_SYNTHASE_2"/>
    <property type="match status" value="1"/>
</dbReference>
<dbReference type="PROSITE" id="PS00789">
    <property type="entry name" value="CHORISMATE_SYNTHASE_3"/>
    <property type="match status" value="1"/>
</dbReference>
<comment type="function">
    <text evidence="1">Catalyzes the anti-1,4-elimination of the C-3 phosphate and the C-6 proR hydrogen from 5-enolpyruvylshikimate-3-phosphate (EPSP) to yield chorismate, which is the branch point compound that serves as the starting substrate for the three terminal pathways of aromatic amino acid biosynthesis. This reaction introduces a second double bond into the aromatic ring system.</text>
</comment>
<comment type="catalytic activity">
    <reaction evidence="1">
        <text>5-O-(1-carboxyvinyl)-3-phosphoshikimate = chorismate + phosphate</text>
        <dbReference type="Rhea" id="RHEA:21020"/>
        <dbReference type="ChEBI" id="CHEBI:29748"/>
        <dbReference type="ChEBI" id="CHEBI:43474"/>
        <dbReference type="ChEBI" id="CHEBI:57701"/>
        <dbReference type="EC" id="4.2.3.5"/>
    </reaction>
</comment>
<comment type="cofactor">
    <cofactor evidence="1">
        <name>FMNH2</name>
        <dbReference type="ChEBI" id="CHEBI:57618"/>
    </cofactor>
    <text evidence="1">Reduced FMN (FMNH(2)).</text>
</comment>
<comment type="pathway">
    <text evidence="1">Metabolic intermediate biosynthesis; chorismate biosynthesis; chorismate from D-erythrose 4-phosphate and phosphoenolpyruvate: step 7/7.</text>
</comment>
<comment type="subunit">
    <text evidence="1">Homotetramer.</text>
</comment>
<comment type="similarity">
    <text evidence="1">Belongs to the chorismate synthase family.</text>
</comment>
<evidence type="ECO:0000255" key="1">
    <source>
        <dbReference type="HAMAP-Rule" id="MF_00300"/>
    </source>
</evidence>
<sequence length="404" mass="42014">MGPVLRWITAGESHGRALVAVLEGMVAGVEITSTDISEQLARRRLGYGRGARMSFERDAVSVLSGVRHGLTLGGPIAVEIGNTEWPKWETVMATDPVDPAQLADSARNAPLTRPRPGHADYAGMLKYGFDDARPVLERASARETAARVAAGTIARSFLRQALGVEVLSHVIAIGPSAPYEGPPPGPGDLPAIDASPVRAYDEAAEQAMIAEIEAAKKDGDTLGGVVEVVALGLPVGLGSFTSGDNRLDGQLAAAVMGIQAIKGVEIGDGFATARRRGSQAHDEMYPGPDGVVRSTNRAGGLEGGMTNGQPLRVRAAMKPISTVPRALATVDMATGDEAVAIHQRSDVCAVPAAGVVVEAMVALVLARATLQKFGGDSLAETRRNIDAYRRAVAEREAPAARGTA</sequence>
<keyword id="KW-0028">Amino-acid biosynthesis</keyword>
<keyword id="KW-0057">Aromatic amino acid biosynthesis</keyword>
<keyword id="KW-0274">FAD</keyword>
<keyword id="KW-0285">Flavoprotein</keyword>
<keyword id="KW-0288">FMN</keyword>
<keyword id="KW-0456">Lyase</keyword>
<keyword id="KW-0521">NADP</keyword>
<keyword id="KW-1185">Reference proteome</keyword>
<name>AROC_MYCPA</name>
<proteinExistence type="inferred from homology"/>
<feature type="chain" id="PRO_0000140614" description="Chorismate synthase">
    <location>
        <begin position="1"/>
        <end position="404"/>
    </location>
</feature>
<feature type="binding site" evidence="1">
    <location>
        <position position="43"/>
    </location>
    <ligand>
        <name>NADP(+)</name>
        <dbReference type="ChEBI" id="CHEBI:58349"/>
    </ligand>
</feature>
<feature type="binding site" evidence="1">
    <location>
        <position position="49"/>
    </location>
    <ligand>
        <name>NADP(+)</name>
        <dbReference type="ChEBI" id="CHEBI:58349"/>
    </ligand>
</feature>
<feature type="binding site" evidence="1">
    <location>
        <begin position="138"/>
        <end position="140"/>
    </location>
    <ligand>
        <name>FMN</name>
        <dbReference type="ChEBI" id="CHEBI:58210"/>
    </ligand>
</feature>
<feature type="binding site" evidence="1">
    <location>
        <begin position="259"/>
        <end position="260"/>
    </location>
    <ligand>
        <name>FMN</name>
        <dbReference type="ChEBI" id="CHEBI:58210"/>
    </ligand>
</feature>
<feature type="binding site" evidence="1">
    <location>
        <position position="303"/>
    </location>
    <ligand>
        <name>FMN</name>
        <dbReference type="ChEBI" id="CHEBI:58210"/>
    </ligand>
</feature>
<feature type="binding site" evidence="1">
    <location>
        <begin position="318"/>
        <end position="322"/>
    </location>
    <ligand>
        <name>FMN</name>
        <dbReference type="ChEBI" id="CHEBI:58210"/>
    </ligand>
</feature>
<feature type="binding site" evidence="1">
    <location>
        <position position="344"/>
    </location>
    <ligand>
        <name>FMN</name>
        <dbReference type="ChEBI" id="CHEBI:58210"/>
    </ligand>
</feature>